<organismHost>
    <name type="scientific">Acheta domesticus</name>
    <name type="common">House cricket</name>
    <dbReference type="NCBI Taxonomy" id="6997"/>
</organismHost>
<organismHost>
    <name type="scientific">Chilo suppressalis</name>
    <name type="common">Asiatic rice borer moth</name>
    <dbReference type="NCBI Taxonomy" id="168631"/>
</organismHost>
<organismHost>
    <name type="scientific">Gryllus bimaculatus</name>
    <name type="common">Two-spotted cricket</name>
    <dbReference type="NCBI Taxonomy" id="6999"/>
</organismHost>
<organismHost>
    <name type="scientific">Gryllus campestris</name>
    <dbReference type="NCBI Taxonomy" id="58607"/>
</organismHost>
<organismHost>
    <name type="scientific">Spodoptera frugiperda</name>
    <name type="common">Fall armyworm</name>
    <dbReference type="NCBI Taxonomy" id="7108"/>
</organismHost>
<gene>
    <name type="ORF">IIV6-376L</name>
</gene>
<sequence length="360" mass="42154">MSLLKGRNYYKPFTYPEFYNKWDKHEKSHWLPSEVPMHDDVNDWKNRLNDNQRDFLTNIFRFFTQGDVDVASAYYTQYLPFFKLPEVTMMMGGFAGREGVHIDAYSYLLETLGMPEATYKEFLMYEEMKDKQDYIKKFSDSRHILGKGEENLTTEDKEHIAAGIALFSGFTEGMQLFSTFAMLLIFPLNGFMKGMGQIVTWSIVDETQHTEGMIELFKVFVEENKTGDQPIRPSVLQETVYKIAKEMVGLEEAFIDLVFKKYKDEPINDDNDLETKDNKDFFGLTPQRLKAYIKYIADRRLNLMGYKSIFNLEPYPTNPLPELEIMINAPTHTNFFENRSTDYANVSTKGTWSEIWNKPQ</sequence>
<reference key="1">
    <citation type="journal article" date="2001" name="Virology">
        <title>Analysis of the first complete DNA sequence of an invertebrate iridovirus: coding strategy of the genome of Chilo iridescent virus.</title>
        <authorList>
            <person name="Jakob N.J."/>
            <person name="Mueller K."/>
            <person name="Bahr U."/>
            <person name="Darai G."/>
        </authorList>
    </citation>
    <scope>NUCLEOTIDE SEQUENCE [LARGE SCALE GENOMIC DNA]</scope>
</reference>
<reference key="2">
    <citation type="journal article" date="2007" name="Virol. J.">
        <title>Comparative genomic analysis of the family Iridoviridae: re-annotating and defining the core set of iridovirus genes.</title>
        <authorList>
            <person name="Eaton H.E."/>
            <person name="Metcalf J."/>
            <person name="Penny E."/>
            <person name="Tcherepanov V."/>
            <person name="Upton C."/>
            <person name="Brunetti C.R."/>
        </authorList>
    </citation>
    <scope>GENOME REANNOTATION</scope>
</reference>
<protein>
    <recommendedName>
        <fullName>Probable ribonucleoside-diphosphate reductase small subunit 376L</fullName>
        <ecNumber>1.17.4.1</ecNumber>
    </recommendedName>
    <alternativeName>
        <fullName>Ribonucleotide reductase small subunit</fullName>
    </alternativeName>
</protein>
<feature type="chain" id="PRO_0000376910" description="Probable ribonucleoside-diphosphate reductase small subunit 376L">
    <location>
        <begin position="1"/>
        <end position="360"/>
    </location>
</feature>
<feature type="active site" evidence="1">
    <location>
        <position position="105"/>
    </location>
</feature>
<feature type="binding site" evidence="1">
    <location>
        <position position="67"/>
    </location>
    <ligand>
        <name>Fe cation</name>
        <dbReference type="ChEBI" id="CHEBI:24875"/>
        <label>1</label>
    </ligand>
</feature>
<feature type="binding site" evidence="1">
    <location>
        <position position="98"/>
    </location>
    <ligand>
        <name>Fe cation</name>
        <dbReference type="ChEBI" id="CHEBI:24875"/>
        <label>1</label>
    </ligand>
</feature>
<feature type="binding site" evidence="1">
    <location>
        <position position="98"/>
    </location>
    <ligand>
        <name>Fe cation</name>
        <dbReference type="ChEBI" id="CHEBI:24875"/>
        <label>2</label>
    </ligand>
</feature>
<feature type="binding site" evidence="1">
    <location>
        <position position="101"/>
    </location>
    <ligand>
        <name>Fe cation</name>
        <dbReference type="ChEBI" id="CHEBI:24875"/>
        <label>1</label>
    </ligand>
</feature>
<feature type="binding site" evidence="1">
    <location>
        <position position="172"/>
    </location>
    <ligand>
        <name>Fe cation</name>
        <dbReference type="ChEBI" id="CHEBI:24875"/>
        <label>2</label>
    </ligand>
</feature>
<feature type="binding site" evidence="1">
    <location>
        <position position="206"/>
    </location>
    <ligand>
        <name>Fe cation</name>
        <dbReference type="ChEBI" id="CHEBI:24875"/>
        <label>2</label>
    </ligand>
</feature>
<feature type="binding site" evidence="1">
    <location>
        <position position="209"/>
    </location>
    <ligand>
        <name>Fe cation</name>
        <dbReference type="ChEBI" id="CHEBI:24875"/>
        <label>2</label>
    </ligand>
</feature>
<proteinExistence type="inferred from homology"/>
<comment type="function">
    <text evidence="1">Ribonucleoside-diphosphate reductase holoenzyme provides the precursors necessary for viral DNA synthesis. Allows virus growth in non-dividing cells. Catalyzes the biosynthesis of deoxyribonucleotides from the corresponding ribonucleotides (By similarity).</text>
</comment>
<comment type="catalytic activity">
    <reaction>
        <text>a 2'-deoxyribonucleoside 5'-diphosphate + [thioredoxin]-disulfide + H2O = a ribonucleoside 5'-diphosphate + [thioredoxin]-dithiol</text>
        <dbReference type="Rhea" id="RHEA:23252"/>
        <dbReference type="Rhea" id="RHEA-COMP:10698"/>
        <dbReference type="Rhea" id="RHEA-COMP:10700"/>
        <dbReference type="ChEBI" id="CHEBI:15377"/>
        <dbReference type="ChEBI" id="CHEBI:29950"/>
        <dbReference type="ChEBI" id="CHEBI:50058"/>
        <dbReference type="ChEBI" id="CHEBI:57930"/>
        <dbReference type="ChEBI" id="CHEBI:73316"/>
        <dbReference type="EC" id="1.17.4.1"/>
    </reaction>
</comment>
<comment type="cofactor">
    <cofactor evidence="1">
        <name>Fe cation</name>
        <dbReference type="ChEBI" id="CHEBI:24875"/>
    </cofactor>
    <text evidence="1">Binds 2 iron ions per subunit.</text>
</comment>
<comment type="subunit">
    <text evidence="1">Heterotetramer composed of a homodimer of the large subunit (R1) and a homodimer of the small subunit (R2). Larger multisubunit protein complex are also active, composed of (R1)n(R2)n (By similarity).</text>
</comment>
<comment type="similarity">
    <text evidence="2">Belongs to the ribonucleoside diphosphate reductase small chain family.</text>
</comment>
<evidence type="ECO:0000250" key="1"/>
<evidence type="ECO:0000305" key="2"/>
<name>RIR2_IIV6</name>
<organism>
    <name type="scientific">Invertebrate iridescent virus 6</name>
    <name type="common">IIV-6</name>
    <name type="synonym">Chilo iridescent virus</name>
    <dbReference type="NCBI Taxonomy" id="176652"/>
    <lineage>
        <taxon>Viruses</taxon>
        <taxon>Varidnaviria</taxon>
        <taxon>Bamfordvirae</taxon>
        <taxon>Nucleocytoviricota</taxon>
        <taxon>Megaviricetes</taxon>
        <taxon>Pimascovirales</taxon>
        <taxon>Iridoviridae</taxon>
        <taxon>Betairidovirinae</taxon>
        <taxon>Iridovirus</taxon>
    </lineage>
</organism>
<keyword id="KW-0215">Deoxyribonucleotide synthesis</keyword>
<keyword id="KW-0408">Iron</keyword>
<keyword id="KW-0479">Metal-binding</keyword>
<keyword id="KW-0560">Oxidoreductase</keyword>
<keyword id="KW-1185">Reference proteome</keyword>
<dbReference type="EC" id="1.17.4.1"/>
<dbReference type="EMBL" id="AF303741">
    <property type="protein sequence ID" value="AAK82236.1"/>
    <property type="molecule type" value="Genomic_DNA"/>
</dbReference>
<dbReference type="RefSeq" id="NP_149839.1">
    <property type="nucleotide sequence ID" value="NC_003038.1"/>
</dbReference>
<dbReference type="SMR" id="Q91FE8"/>
<dbReference type="KEGG" id="vg:1733046"/>
<dbReference type="OrthoDB" id="4477at10239"/>
<dbReference type="Proteomes" id="UP000001359">
    <property type="component" value="Genome"/>
</dbReference>
<dbReference type="GO" id="GO:0046872">
    <property type="term" value="F:metal ion binding"/>
    <property type="evidence" value="ECO:0007669"/>
    <property type="project" value="UniProtKB-KW"/>
</dbReference>
<dbReference type="GO" id="GO:0004748">
    <property type="term" value="F:ribonucleoside-diphosphate reductase activity, thioredoxin disulfide as acceptor"/>
    <property type="evidence" value="ECO:0007669"/>
    <property type="project" value="UniProtKB-EC"/>
</dbReference>
<dbReference type="GO" id="GO:0009263">
    <property type="term" value="P:deoxyribonucleotide biosynthetic process"/>
    <property type="evidence" value="ECO:0007669"/>
    <property type="project" value="UniProtKB-KW"/>
</dbReference>
<dbReference type="CDD" id="cd01049">
    <property type="entry name" value="RNRR2"/>
    <property type="match status" value="1"/>
</dbReference>
<dbReference type="Gene3D" id="1.10.620.20">
    <property type="entry name" value="Ribonucleotide Reductase, subunit A"/>
    <property type="match status" value="1"/>
</dbReference>
<dbReference type="InterPro" id="IPR009078">
    <property type="entry name" value="Ferritin-like_SF"/>
</dbReference>
<dbReference type="InterPro" id="IPR012348">
    <property type="entry name" value="RNR-like"/>
</dbReference>
<dbReference type="InterPro" id="IPR033909">
    <property type="entry name" value="RNR_small"/>
</dbReference>
<dbReference type="InterPro" id="IPR000358">
    <property type="entry name" value="RNR_small_fam"/>
</dbReference>
<dbReference type="NCBIfam" id="NF007186">
    <property type="entry name" value="PRK09614.1-5"/>
    <property type="match status" value="1"/>
</dbReference>
<dbReference type="PANTHER" id="PTHR23409">
    <property type="entry name" value="RIBONUCLEOSIDE-DIPHOSPHATE REDUCTASE SMALL CHAIN"/>
    <property type="match status" value="1"/>
</dbReference>
<dbReference type="PANTHER" id="PTHR23409:SF18">
    <property type="entry name" value="RIBONUCLEOSIDE-DIPHOSPHATE REDUCTASE SUBUNIT M2"/>
    <property type="match status" value="1"/>
</dbReference>
<dbReference type="Pfam" id="PF00268">
    <property type="entry name" value="Ribonuc_red_sm"/>
    <property type="match status" value="1"/>
</dbReference>
<dbReference type="SUPFAM" id="SSF47240">
    <property type="entry name" value="Ferritin-like"/>
    <property type="match status" value="1"/>
</dbReference>
<accession>Q91FE8</accession>